<protein>
    <recommendedName>
        <fullName evidence="1">Probable endonuclease 4</fullName>
        <ecNumber evidence="1">3.1.21.2</ecNumber>
    </recommendedName>
    <alternativeName>
        <fullName evidence="1">Endodeoxyribonuclease IV</fullName>
    </alternativeName>
    <alternativeName>
        <fullName evidence="1">Endonuclease IV</fullName>
    </alternativeName>
</protein>
<gene>
    <name evidence="1" type="primary">nfo</name>
    <name type="ordered locus">BCAH820_4306</name>
</gene>
<reference key="1">
    <citation type="submission" date="2008-10" db="EMBL/GenBank/DDBJ databases">
        <title>Genome sequence of Bacillus cereus AH820.</title>
        <authorList>
            <person name="Dodson R.J."/>
            <person name="Durkin A.S."/>
            <person name="Rosovitz M.J."/>
            <person name="Rasko D.A."/>
            <person name="Hoffmaster A."/>
            <person name="Ravel J."/>
            <person name="Sutton G."/>
        </authorList>
    </citation>
    <scope>NUCLEOTIDE SEQUENCE [LARGE SCALE GENOMIC DNA]</scope>
    <source>
        <strain>AH820</strain>
    </source>
</reference>
<evidence type="ECO:0000255" key="1">
    <source>
        <dbReference type="HAMAP-Rule" id="MF_00152"/>
    </source>
</evidence>
<sequence length="298" mass="32896">MVKIGSHVSMSGKKMLLAASEEAVSYGATTFMIYTGAPQNTRRKPIEELNIEAGRKHMEQNGIEEIIVHAPYIINVGNTTKPETFQLGVDFLRMEIERTSALGVAKQIVLHPGAHVGAGADAGIQQIIKGLNEVLTPDQTVNIALETMAGKGTECGRSFEEIAKIIDGVKYNEKLSVCFDTCHTHDAGYDIVNDFDGVLNEFDKIVGIDRLQVLHINDSKNVRGAGKDRHENIGFGHIGYKALHHIVHHPQLTHVPKILETPYVGEDKKDKKPPYKLEIEMLKNGTFDEGLLEKIKAQ</sequence>
<dbReference type="EC" id="3.1.21.2" evidence="1"/>
<dbReference type="EMBL" id="CP001283">
    <property type="protein sequence ID" value="ACK91578.1"/>
    <property type="molecule type" value="Genomic_DNA"/>
</dbReference>
<dbReference type="RefSeq" id="WP_000238740.1">
    <property type="nucleotide sequence ID" value="NC_011773.1"/>
</dbReference>
<dbReference type="SMR" id="B7JN09"/>
<dbReference type="KEGG" id="bcu:BCAH820_4306"/>
<dbReference type="HOGENOM" id="CLU_025885_4_1_9"/>
<dbReference type="Proteomes" id="UP000001363">
    <property type="component" value="Chromosome"/>
</dbReference>
<dbReference type="GO" id="GO:0008833">
    <property type="term" value="F:deoxyribonuclease IV (phage-T4-induced) activity"/>
    <property type="evidence" value="ECO:0007669"/>
    <property type="project" value="UniProtKB-UniRule"/>
</dbReference>
<dbReference type="GO" id="GO:0003677">
    <property type="term" value="F:DNA binding"/>
    <property type="evidence" value="ECO:0007669"/>
    <property type="project" value="InterPro"/>
</dbReference>
<dbReference type="GO" id="GO:0003906">
    <property type="term" value="F:DNA-(apurinic or apyrimidinic site) endonuclease activity"/>
    <property type="evidence" value="ECO:0007669"/>
    <property type="project" value="TreeGrafter"/>
</dbReference>
<dbReference type="GO" id="GO:0008081">
    <property type="term" value="F:phosphoric diester hydrolase activity"/>
    <property type="evidence" value="ECO:0007669"/>
    <property type="project" value="TreeGrafter"/>
</dbReference>
<dbReference type="GO" id="GO:0008270">
    <property type="term" value="F:zinc ion binding"/>
    <property type="evidence" value="ECO:0007669"/>
    <property type="project" value="UniProtKB-UniRule"/>
</dbReference>
<dbReference type="GO" id="GO:0006284">
    <property type="term" value="P:base-excision repair"/>
    <property type="evidence" value="ECO:0007669"/>
    <property type="project" value="TreeGrafter"/>
</dbReference>
<dbReference type="CDD" id="cd00019">
    <property type="entry name" value="AP2Ec"/>
    <property type="match status" value="1"/>
</dbReference>
<dbReference type="FunFam" id="3.20.20.150:FF:000001">
    <property type="entry name" value="Probable endonuclease 4"/>
    <property type="match status" value="1"/>
</dbReference>
<dbReference type="Gene3D" id="3.20.20.150">
    <property type="entry name" value="Divalent-metal-dependent TIM barrel enzymes"/>
    <property type="match status" value="1"/>
</dbReference>
<dbReference type="HAMAP" id="MF_00152">
    <property type="entry name" value="Nfo"/>
    <property type="match status" value="1"/>
</dbReference>
<dbReference type="InterPro" id="IPR001719">
    <property type="entry name" value="AP_endonuc_2"/>
</dbReference>
<dbReference type="InterPro" id="IPR018246">
    <property type="entry name" value="AP_endonuc_F2_Zn_BS"/>
</dbReference>
<dbReference type="InterPro" id="IPR036237">
    <property type="entry name" value="Xyl_isomerase-like_sf"/>
</dbReference>
<dbReference type="InterPro" id="IPR013022">
    <property type="entry name" value="Xyl_isomerase-like_TIM-brl"/>
</dbReference>
<dbReference type="NCBIfam" id="TIGR00587">
    <property type="entry name" value="nfo"/>
    <property type="match status" value="1"/>
</dbReference>
<dbReference type="NCBIfam" id="NF002196">
    <property type="entry name" value="PRK01060.1-1"/>
    <property type="match status" value="1"/>
</dbReference>
<dbReference type="PANTHER" id="PTHR21445:SF0">
    <property type="entry name" value="APURINIC-APYRIMIDINIC ENDONUCLEASE"/>
    <property type="match status" value="1"/>
</dbReference>
<dbReference type="PANTHER" id="PTHR21445">
    <property type="entry name" value="ENDONUCLEASE IV ENDODEOXYRIBONUCLEASE IV"/>
    <property type="match status" value="1"/>
</dbReference>
<dbReference type="Pfam" id="PF01261">
    <property type="entry name" value="AP_endonuc_2"/>
    <property type="match status" value="1"/>
</dbReference>
<dbReference type="SMART" id="SM00518">
    <property type="entry name" value="AP2Ec"/>
    <property type="match status" value="1"/>
</dbReference>
<dbReference type="SUPFAM" id="SSF51658">
    <property type="entry name" value="Xylose isomerase-like"/>
    <property type="match status" value="1"/>
</dbReference>
<dbReference type="PROSITE" id="PS00729">
    <property type="entry name" value="AP_NUCLEASE_F2_1"/>
    <property type="match status" value="1"/>
</dbReference>
<dbReference type="PROSITE" id="PS00730">
    <property type="entry name" value="AP_NUCLEASE_F2_2"/>
    <property type="match status" value="1"/>
</dbReference>
<dbReference type="PROSITE" id="PS00731">
    <property type="entry name" value="AP_NUCLEASE_F2_3"/>
    <property type="match status" value="1"/>
</dbReference>
<dbReference type="PROSITE" id="PS51432">
    <property type="entry name" value="AP_NUCLEASE_F2_4"/>
    <property type="match status" value="1"/>
</dbReference>
<comment type="function">
    <text evidence="1">Endonuclease IV plays a role in DNA repair. It cleaves phosphodiester bonds at apurinic or apyrimidinic (AP) sites, generating a 3'-hydroxyl group and a 5'-terminal sugar phosphate.</text>
</comment>
<comment type="catalytic activity">
    <reaction evidence="1">
        <text>Endonucleolytic cleavage to 5'-phosphooligonucleotide end-products.</text>
        <dbReference type="EC" id="3.1.21.2"/>
    </reaction>
</comment>
<comment type="cofactor">
    <cofactor evidence="1">
        <name>Zn(2+)</name>
        <dbReference type="ChEBI" id="CHEBI:29105"/>
    </cofactor>
    <text evidence="1">Binds 3 Zn(2+) ions.</text>
</comment>
<comment type="similarity">
    <text evidence="1">Belongs to the AP endonuclease 2 family.</text>
</comment>
<accession>B7JN09</accession>
<feature type="chain" id="PRO_1000118089" description="Probable endonuclease 4">
    <location>
        <begin position="1"/>
        <end position="298"/>
    </location>
</feature>
<feature type="binding site" evidence="1">
    <location>
        <position position="69"/>
    </location>
    <ligand>
        <name>Zn(2+)</name>
        <dbReference type="ChEBI" id="CHEBI:29105"/>
        <label>1</label>
    </ligand>
</feature>
<feature type="binding site" evidence="1">
    <location>
        <position position="111"/>
    </location>
    <ligand>
        <name>Zn(2+)</name>
        <dbReference type="ChEBI" id="CHEBI:29105"/>
        <label>1</label>
    </ligand>
</feature>
<feature type="binding site" evidence="1">
    <location>
        <position position="146"/>
    </location>
    <ligand>
        <name>Zn(2+)</name>
        <dbReference type="ChEBI" id="CHEBI:29105"/>
        <label>1</label>
    </ligand>
</feature>
<feature type="binding site" evidence="1">
    <location>
        <position position="146"/>
    </location>
    <ligand>
        <name>Zn(2+)</name>
        <dbReference type="ChEBI" id="CHEBI:29105"/>
        <label>2</label>
    </ligand>
</feature>
<feature type="binding site" evidence="1">
    <location>
        <position position="180"/>
    </location>
    <ligand>
        <name>Zn(2+)</name>
        <dbReference type="ChEBI" id="CHEBI:29105"/>
        <label>2</label>
    </ligand>
</feature>
<feature type="binding site" evidence="1">
    <location>
        <position position="183"/>
    </location>
    <ligand>
        <name>Zn(2+)</name>
        <dbReference type="ChEBI" id="CHEBI:29105"/>
        <label>3</label>
    </ligand>
</feature>
<feature type="binding site" evidence="1">
    <location>
        <position position="215"/>
    </location>
    <ligand>
        <name>Zn(2+)</name>
        <dbReference type="ChEBI" id="CHEBI:29105"/>
        <label>2</label>
    </ligand>
</feature>
<feature type="binding site" evidence="1">
    <location>
        <position position="228"/>
    </location>
    <ligand>
        <name>Zn(2+)</name>
        <dbReference type="ChEBI" id="CHEBI:29105"/>
        <label>3</label>
    </ligand>
</feature>
<feature type="binding site" evidence="1">
    <location>
        <position position="230"/>
    </location>
    <ligand>
        <name>Zn(2+)</name>
        <dbReference type="ChEBI" id="CHEBI:29105"/>
        <label>3</label>
    </ligand>
</feature>
<feature type="binding site" evidence="1">
    <location>
        <position position="260"/>
    </location>
    <ligand>
        <name>Zn(2+)</name>
        <dbReference type="ChEBI" id="CHEBI:29105"/>
        <label>2</label>
    </ligand>
</feature>
<keyword id="KW-0227">DNA damage</keyword>
<keyword id="KW-0234">DNA repair</keyword>
<keyword id="KW-0255">Endonuclease</keyword>
<keyword id="KW-0378">Hydrolase</keyword>
<keyword id="KW-0479">Metal-binding</keyword>
<keyword id="KW-0540">Nuclease</keyword>
<keyword id="KW-0862">Zinc</keyword>
<organism>
    <name type="scientific">Bacillus cereus (strain AH820)</name>
    <dbReference type="NCBI Taxonomy" id="405535"/>
    <lineage>
        <taxon>Bacteria</taxon>
        <taxon>Bacillati</taxon>
        <taxon>Bacillota</taxon>
        <taxon>Bacilli</taxon>
        <taxon>Bacillales</taxon>
        <taxon>Bacillaceae</taxon>
        <taxon>Bacillus</taxon>
        <taxon>Bacillus cereus group</taxon>
    </lineage>
</organism>
<name>END4_BACC0</name>
<proteinExistence type="inferred from homology"/>